<sequence length="86" mass="10187">MSIDTQSIIENNKRSAHDTGSPEVQVALLTARIELLTKHFKIHKKDHHSRRGLLQMVNRRRSLLDYLNKKDNERYKLLIEKLGLRR</sequence>
<organism>
    <name type="scientific">Xylella fastidiosa (strain M12)</name>
    <dbReference type="NCBI Taxonomy" id="405440"/>
    <lineage>
        <taxon>Bacteria</taxon>
        <taxon>Pseudomonadati</taxon>
        <taxon>Pseudomonadota</taxon>
        <taxon>Gammaproteobacteria</taxon>
        <taxon>Lysobacterales</taxon>
        <taxon>Lysobacteraceae</taxon>
        <taxon>Xylella</taxon>
    </lineage>
</organism>
<gene>
    <name evidence="1" type="primary">rpsO</name>
    <name type="ordered locus">Xfasm12_0206</name>
</gene>
<comment type="function">
    <text evidence="1">One of the primary rRNA binding proteins, it binds directly to 16S rRNA where it helps nucleate assembly of the platform of the 30S subunit by binding and bridging several RNA helices of the 16S rRNA.</text>
</comment>
<comment type="function">
    <text evidence="1">Forms an intersubunit bridge (bridge B4) with the 23S rRNA of the 50S subunit in the ribosome.</text>
</comment>
<comment type="subunit">
    <text evidence="1">Part of the 30S ribosomal subunit. Forms a bridge to the 50S subunit in the 70S ribosome, contacting the 23S rRNA.</text>
</comment>
<comment type="similarity">
    <text evidence="1">Belongs to the universal ribosomal protein uS15 family.</text>
</comment>
<accession>B0U1R1</accession>
<dbReference type="EMBL" id="CP000941">
    <property type="protein sequence ID" value="ACA11239.1"/>
    <property type="molecule type" value="Genomic_DNA"/>
</dbReference>
<dbReference type="RefSeq" id="WP_004086259.1">
    <property type="nucleotide sequence ID" value="NC_010513.1"/>
</dbReference>
<dbReference type="SMR" id="B0U1R1"/>
<dbReference type="KEGG" id="xfm:Xfasm12_0206"/>
<dbReference type="HOGENOM" id="CLU_148518_1_0_6"/>
<dbReference type="GO" id="GO:0022627">
    <property type="term" value="C:cytosolic small ribosomal subunit"/>
    <property type="evidence" value="ECO:0007669"/>
    <property type="project" value="TreeGrafter"/>
</dbReference>
<dbReference type="GO" id="GO:0019843">
    <property type="term" value="F:rRNA binding"/>
    <property type="evidence" value="ECO:0007669"/>
    <property type="project" value="UniProtKB-UniRule"/>
</dbReference>
<dbReference type="GO" id="GO:0003735">
    <property type="term" value="F:structural constituent of ribosome"/>
    <property type="evidence" value="ECO:0007669"/>
    <property type="project" value="InterPro"/>
</dbReference>
<dbReference type="GO" id="GO:0006412">
    <property type="term" value="P:translation"/>
    <property type="evidence" value="ECO:0007669"/>
    <property type="project" value="UniProtKB-UniRule"/>
</dbReference>
<dbReference type="CDD" id="cd00353">
    <property type="entry name" value="Ribosomal_S15p_S13e"/>
    <property type="match status" value="1"/>
</dbReference>
<dbReference type="FunFam" id="1.10.287.10:FF:000002">
    <property type="entry name" value="30S ribosomal protein S15"/>
    <property type="match status" value="1"/>
</dbReference>
<dbReference type="Gene3D" id="6.10.250.3130">
    <property type="match status" value="1"/>
</dbReference>
<dbReference type="Gene3D" id="1.10.287.10">
    <property type="entry name" value="S15/NS1, RNA-binding"/>
    <property type="match status" value="1"/>
</dbReference>
<dbReference type="HAMAP" id="MF_01343_B">
    <property type="entry name" value="Ribosomal_uS15_B"/>
    <property type="match status" value="1"/>
</dbReference>
<dbReference type="InterPro" id="IPR000589">
    <property type="entry name" value="Ribosomal_uS15"/>
</dbReference>
<dbReference type="InterPro" id="IPR005290">
    <property type="entry name" value="Ribosomal_uS15_bac-type"/>
</dbReference>
<dbReference type="InterPro" id="IPR009068">
    <property type="entry name" value="uS15_NS1_RNA-bd_sf"/>
</dbReference>
<dbReference type="NCBIfam" id="TIGR00952">
    <property type="entry name" value="S15_bact"/>
    <property type="match status" value="1"/>
</dbReference>
<dbReference type="PANTHER" id="PTHR23321">
    <property type="entry name" value="RIBOSOMAL PROTEIN S15, BACTERIAL AND ORGANELLAR"/>
    <property type="match status" value="1"/>
</dbReference>
<dbReference type="PANTHER" id="PTHR23321:SF26">
    <property type="entry name" value="SMALL RIBOSOMAL SUBUNIT PROTEIN US15M"/>
    <property type="match status" value="1"/>
</dbReference>
<dbReference type="Pfam" id="PF00312">
    <property type="entry name" value="Ribosomal_S15"/>
    <property type="match status" value="1"/>
</dbReference>
<dbReference type="SMART" id="SM01387">
    <property type="entry name" value="Ribosomal_S15"/>
    <property type="match status" value="1"/>
</dbReference>
<dbReference type="SUPFAM" id="SSF47060">
    <property type="entry name" value="S15/NS1 RNA-binding domain"/>
    <property type="match status" value="1"/>
</dbReference>
<dbReference type="PROSITE" id="PS00362">
    <property type="entry name" value="RIBOSOMAL_S15"/>
    <property type="match status" value="1"/>
</dbReference>
<evidence type="ECO:0000255" key="1">
    <source>
        <dbReference type="HAMAP-Rule" id="MF_01343"/>
    </source>
</evidence>
<evidence type="ECO:0000256" key="2">
    <source>
        <dbReference type="SAM" id="MobiDB-lite"/>
    </source>
</evidence>
<evidence type="ECO:0000305" key="3"/>
<name>RS15_XYLFM</name>
<feature type="chain" id="PRO_1000143196" description="Small ribosomal subunit protein uS15">
    <location>
        <begin position="1"/>
        <end position="86"/>
    </location>
</feature>
<feature type="region of interest" description="Disordered" evidence="2">
    <location>
        <begin position="1"/>
        <end position="21"/>
    </location>
</feature>
<feature type="compositionally biased region" description="Polar residues" evidence="2">
    <location>
        <begin position="1"/>
        <end position="10"/>
    </location>
</feature>
<proteinExistence type="inferred from homology"/>
<keyword id="KW-0687">Ribonucleoprotein</keyword>
<keyword id="KW-0689">Ribosomal protein</keyword>
<keyword id="KW-0694">RNA-binding</keyword>
<keyword id="KW-0699">rRNA-binding</keyword>
<protein>
    <recommendedName>
        <fullName evidence="1">Small ribosomal subunit protein uS15</fullName>
    </recommendedName>
    <alternativeName>
        <fullName evidence="3">30S ribosomal protein S15</fullName>
    </alternativeName>
</protein>
<reference key="1">
    <citation type="journal article" date="2010" name="J. Bacteriol.">
        <title>Whole genome sequences of two Xylella fastidiosa strains (M12 and M23) causing almond leaf scorch disease in California.</title>
        <authorList>
            <person name="Chen J."/>
            <person name="Xie G."/>
            <person name="Han S."/>
            <person name="Chertkov O."/>
            <person name="Sims D."/>
            <person name="Civerolo E.L."/>
        </authorList>
    </citation>
    <scope>NUCLEOTIDE SEQUENCE [LARGE SCALE GENOMIC DNA]</scope>
    <source>
        <strain>M12</strain>
    </source>
</reference>